<name>RS14_FRATM</name>
<keyword id="KW-0687">Ribonucleoprotein</keyword>
<keyword id="KW-0689">Ribosomal protein</keyword>
<keyword id="KW-0694">RNA-binding</keyword>
<keyword id="KW-0699">rRNA-binding</keyword>
<reference key="1">
    <citation type="journal article" date="2009" name="PLoS Pathog.">
        <title>Molecular evolutionary consequences of niche restriction in Francisella tularensis, a facultative intracellular pathogen.</title>
        <authorList>
            <person name="Larsson P."/>
            <person name="Elfsmark D."/>
            <person name="Svensson K."/>
            <person name="Wikstroem P."/>
            <person name="Forsman M."/>
            <person name="Brettin T."/>
            <person name="Keim P."/>
            <person name="Johansson A."/>
        </authorList>
    </citation>
    <scope>NUCLEOTIDE SEQUENCE [LARGE SCALE GENOMIC DNA]</scope>
    <source>
        <strain>FSC147</strain>
    </source>
</reference>
<sequence>MAKKSMIQRELKREKLVAKYAQKRAEFKAIILDINSTEEQIWEAQIKLQKLPVNSSASRVQRRCKVTGRPHAVYRKFGLCRNKLREYAMAGDVPGLKKASW</sequence>
<proteinExistence type="inferred from homology"/>
<accession>B2SDX2</accession>
<feature type="chain" id="PRO_1000128408" description="Small ribosomal subunit protein uS14">
    <location>
        <begin position="1"/>
        <end position="101"/>
    </location>
</feature>
<comment type="function">
    <text evidence="1">Binds 16S rRNA, required for the assembly of 30S particles and may also be responsible for determining the conformation of the 16S rRNA at the A site.</text>
</comment>
<comment type="subunit">
    <text evidence="1">Part of the 30S ribosomal subunit. Contacts proteins S3 and S10.</text>
</comment>
<comment type="similarity">
    <text evidence="1">Belongs to the universal ribosomal protein uS14 family.</text>
</comment>
<dbReference type="EMBL" id="CP000915">
    <property type="protein sequence ID" value="ACD31336.1"/>
    <property type="molecule type" value="Genomic_DNA"/>
</dbReference>
<dbReference type="SMR" id="B2SDX2"/>
<dbReference type="KEGG" id="ftm:FTM_1514"/>
<dbReference type="HOGENOM" id="CLU_139869_0_1_6"/>
<dbReference type="GO" id="GO:0005737">
    <property type="term" value="C:cytoplasm"/>
    <property type="evidence" value="ECO:0007669"/>
    <property type="project" value="UniProtKB-ARBA"/>
</dbReference>
<dbReference type="GO" id="GO:0015935">
    <property type="term" value="C:small ribosomal subunit"/>
    <property type="evidence" value="ECO:0007669"/>
    <property type="project" value="TreeGrafter"/>
</dbReference>
<dbReference type="GO" id="GO:0019843">
    <property type="term" value="F:rRNA binding"/>
    <property type="evidence" value="ECO:0007669"/>
    <property type="project" value="UniProtKB-UniRule"/>
</dbReference>
<dbReference type="GO" id="GO:0003735">
    <property type="term" value="F:structural constituent of ribosome"/>
    <property type="evidence" value="ECO:0007669"/>
    <property type="project" value="InterPro"/>
</dbReference>
<dbReference type="GO" id="GO:0006412">
    <property type="term" value="P:translation"/>
    <property type="evidence" value="ECO:0007669"/>
    <property type="project" value="UniProtKB-UniRule"/>
</dbReference>
<dbReference type="FunFam" id="1.10.287.1480:FF:000001">
    <property type="entry name" value="30S ribosomal protein S14"/>
    <property type="match status" value="1"/>
</dbReference>
<dbReference type="Gene3D" id="1.10.287.1480">
    <property type="match status" value="1"/>
</dbReference>
<dbReference type="HAMAP" id="MF_00537">
    <property type="entry name" value="Ribosomal_uS14_1"/>
    <property type="match status" value="1"/>
</dbReference>
<dbReference type="InterPro" id="IPR001209">
    <property type="entry name" value="Ribosomal_uS14"/>
</dbReference>
<dbReference type="InterPro" id="IPR023036">
    <property type="entry name" value="Ribosomal_uS14_bac/plastid"/>
</dbReference>
<dbReference type="InterPro" id="IPR018271">
    <property type="entry name" value="Ribosomal_uS14_CS"/>
</dbReference>
<dbReference type="NCBIfam" id="NF006477">
    <property type="entry name" value="PRK08881.1"/>
    <property type="match status" value="1"/>
</dbReference>
<dbReference type="PANTHER" id="PTHR19836">
    <property type="entry name" value="30S RIBOSOMAL PROTEIN S14"/>
    <property type="match status" value="1"/>
</dbReference>
<dbReference type="PANTHER" id="PTHR19836:SF19">
    <property type="entry name" value="SMALL RIBOSOMAL SUBUNIT PROTEIN US14M"/>
    <property type="match status" value="1"/>
</dbReference>
<dbReference type="Pfam" id="PF00253">
    <property type="entry name" value="Ribosomal_S14"/>
    <property type="match status" value="1"/>
</dbReference>
<dbReference type="SUPFAM" id="SSF57716">
    <property type="entry name" value="Glucocorticoid receptor-like (DNA-binding domain)"/>
    <property type="match status" value="1"/>
</dbReference>
<dbReference type="PROSITE" id="PS00527">
    <property type="entry name" value="RIBOSOMAL_S14"/>
    <property type="match status" value="1"/>
</dbReference>
<organism>
    <name type="scientific">Francisella tularensis subsp. mediasiatica (strain FSC147)</name>
    <dbReference type="NCBI Taxonomy" id="441952"/>
    <lineage>
        <taxon>Bacteria</taxon>
        <taxon>Pseudomonadati</taxon>
        <taxon>Pseudomonadota</taxon>
        <taxon>Gammaproteobacteria</taxon>
        <taxon>Thiotrichales</taxon>
        <taxon>Francisellaceae</taxon>
        <taxon>Francisella</taxon>
    </lineage>
</organism>
<evidence type="ECO:0000255" key="1">
    <source>
        <dbReference type="HAMAP-Rule" id="MF_00537"/>
    </source>
</evidence>
<evidence type="ECO:0000305" key="2"/>
<gene>
    <name evidence="1" type="primary">rpsN</name>
    <name type="ordered locus">FTM_1514</name>
</gene>
<protein>
    <recommendedName>
        <fullName evidence="1">Small ribosomal subunit protein uS14</fullName>
    </recommendedName>
    <alternativeName>
        <fullName evidence="2">30S ribosomal protein S14</fullName>
    </alternativeName>
</protein>